<keyword id="KW-1185">Reference proteome</keyword>
<feature type="chain" id="PRO_0000211362" description="UPF0232 protein ML0004">
    <location>
        <begin position="1"/>
        <end position="189"/>
    </location>
</feature>
<feature type="region of interest" description="Disordered" evidence="1">
    <location>
        <begin position="59"/>
        <end position="78"/>
    </location>
</feature>
<feature type="sequence conflict" description="In Ref. 1; CAA94711." evidence="2" ref="1">
    <original>YG</original>
    <variation>TASRHAGSELSR</variation>
    <location>
        <begin position="188"/>
        <end position="189"/>
    </location>
</feature>
<sequence length="189" mass="20077">MIESNESYSYGGDTIEPLGTLSGFDLVRRALEEARAAACAQGKDAGRGHVVPPVPFRVTDRRRNWSGPGPDVRDPQPLGKVAHDLAKKRGWSAQVAEGRVFGQWASMVGGQIADHAFPVGLNNGVLSVTAESTAWATQLRIMQAQLLAKIAAAVGNGVVTSLKITGPTAPSWRKGPWHIAGRGPRDTYG</sequence>
<protein>
    <recommendedName>
        <fullName>UPF0232 protein ML0004</fullName>
    </recommendedName>
</protein>
<accession>Q9CDF4</accession>
<accession>Q50181</accession>
<proteinExistence type="inferred from homology"/>
<comment type="similarity">
    <text evidence="2">Belongs to the UPF0232 family.</text>
</comment>
<organism>
    <name type="scientific">Mycobacterium leprae (strain TN)</name>
    <dbReference type="NCBI Taxonomy" id="272631"/>
    <lineage>
        <taxon>Bacteria</taxon>
        <taxon>Bacillati</taxon>
        <taxon>Actinomycetota</taxon>
        <taxon>Actinomycetes</taxon>
        <taxon>Mycobacteriales</taxon>
        <taxon>Mycobacteriaceae</taxon>
        <taxon>Mycobacterium</taxon>
    </lineage>
</organism>
<name>Y004_MYCLE</name>
<reference key="1">
    <citation type="journal article" date="1996" name="Microbiology">
        <title>Gene arrangement and organization in an approximately 76 kb fragment encompassing the oriC region of the chromosome of Mycobacterium leprae.</title>
        <authorList>
            <person name="Fsihi H."/>
            <person name="de Rossi E."/>
            <person name="Salazar L."/>
            <person name="Cantoni R."/>
            <person name="Labo M."/>
            <person name="Riccardi G."/>
            <person name="Takiff H.E."/>
            <person name="Eiglmeier K."/>
            <person name="Bergh S."/>
            <person name="Cole S.T."/>
        </authorList>
    </citation>
    <scope>NUCLEOTIDE SEQUENCE [GENOMIC DNA]</scope>
</reference>
<reference key="2">
    <citation type="journal article" date="2001" name="Nature">
        <title>Massive gene decay in the leprosy bacillus.</title>
        <authorList>
            <person name="Cole S.T."/>
            <person name="Eiglmeier K."/>
            <person name="Parkhill J."/>
            <person name="James K.D."/>
            <person name="Thomson N.R."/>
            <person name="Wheeler P.R."/>
            <person name="Honore N."/>
            <person name="Garnier T."/>
            <person name="Churcher C.M."/>
            <person name="Harris D.E."/>
            <person name="Mungall K.L."/>
            <person name="Basham D."/>
            <person name="Brown D."/>
            <person name="Chillingworth T."/>
            <person name="Connor R."/>
            <person name="Davies R.M."/>
            <person name="Devlin K."/>
            <person name="Duthoy S."/>
            <person name="Feltwell T."/>
            <person name="Fraser A."/>
            <person name="Hamlin N."/>
            <person name="Holroyd S."/>
            <person name="Hornsby T."/>
            <person name="Jagels K."/>
            <person name="Lacroix C."/>
            <person name="Maclean J."/>
            <person name="Moule S."/>
            <person name="Murphy L.D."/>
            <person name="Oliver K."/>
            <person name="Quail M.A."/>
            <person name="Rajandream M.A."/>
            <person name="Rutherford K.M."/>
            <person name="Rutter S."/>
            <person name="Seeger K."/>
            <person name="Simon S."/>
            <person name="Simmonds M."/>
            <person name="Skelton J."/>
            <person name="Squares R."/>
            <person name="Squares S."/>
            <person name="Stevens K."/>
            <person name="Taylor K."/>
            <person name="Whitehead S."/>
            <person name="Woodward J.R."/>
            <person name="Barrell B.G."/>
        </authorList>
    </citation>
    <scope>NUCLEOTIDE SEQUENCE [LARGE SCALE GENOMIC DNA]</scope>
    <source>
        <strain>TN</strain>
    </source>
</reference>
<dbReference type="EMBL" id="Z70722">
    <property type="protein sequence ID" value="CAA94711.1"/>
    <property type="molecule type" value="Genomic_DNA"/>
</dbReference>
<dbReference type="EMBL" id="AL583917">
    <property type="protein sequence ID" value="CAC29512.1"/>
    <property type="molecule type" value="Genomic_DNA"/>
</dbReference>
<dbReference type="PIR" id="D86909">
    <property type="entry name" value="D86909"/>
</dbReference>
<dbReference type="PIR" id="T10004">
    <property type="entry name" value="T10004"/>
</dbReference>
<dbReference type="RefSeq" id="NP_301132.1">
    <property type="nucleotide sequence ID" value="NC_002677.1"/>
</dbReference>
<dbReference type="RefSeq" id="WP_010907457.1">
    <property type="nucleotide sequence ID" value="NC_002677.1"/>
</dbReference>
<dbReference type="SMR" id="Q9CDF4"/>
<dbReference type="STRING" id="272631.gene:17573813"/>
<dbReference type="KEGG" id="mle:ML0004"/>
<dbReference type="PATRIC" id="fig|272631.5.peg.4"/>
<dbReference type="Leproma" id="ML0004"/>
<dbReference type="eggNOG" id="COG5512">
    <property type="taxonomic scope" value="Bacteria"/>
</dbReference>
<dbReference type="HOGENOM" id="CLU_087206_0_1_11"/>
<dbReference type="OrthoDB" id="5516926at2"/>
<dbReference type="Proteomes" id="UP000000806">
    <property type="component" value="Chromosome"/>
</dbReference>
<dbReference type="HAMAP" id="MF_00630">
    <property type="entry name" value="UPF0232"/>
    <property type="match status" value="1"/>
</dbReference>
<dbReference type="InterPro" id="IPR007922">
    <property type="entry name" value="DciA-like"/>
</dbReference>
<dbReference type="InterPro" id="IPR023007">
    <property type="entry name" value="UPF0232_actinobac"/>
</dbReference>
<dbReference type="NCBIfam" id="NF002871">
    <property type="entry name" value="PRK03195.1"/>
    <property type="match status" value="1"/>
</dbReference>
<dbReference type="PANTHER" id="PTHR36456">
    <property type="entry name" value="UPF0232 PROTEIN SCO3875"/>
    <property type="match status" value="1"/>
</dbReference>
<dbReference type="PANTHER" id="PTHR36456:SF1">
    <property type="entry name" value="UPF0232 PROTEIN SCO3875"/>
    <property type="match status" value="1"/>
</dbReference>
<dbReference type="Pfam" id="PF05258">
    <property type="entry name" value="DciA"/>
    <property type="match status" value="1"/>
</dbReference>
<gene>
    <name type="ordered locus">ML0004</name>
    <name type="ORF">MLB1770.04</name>
</gene>
<evidence type="ECO:0000256" key="1">
    <source>
        <dbReference type="SAM" id="MobiDB-lite"/>
    </source>
</evidence>
<evidence type="ECO:0000305" key="2"/>